<organism>
    <name type="scientific">Escherichia coli O9:H4 (strain HS)</name>
    <dbReference type="NCBI Taxonomy" id="331112"/>
    <lineage>
        <taxon>Bacteria</taxon>
        <taxon>Pseudomonadati</taxon>
        <taxon>Pseudomonadota</taxon>
        <taxon>Gammaproteobacteria</taxon>
        <taxon>Enterobacterales</taxon>
        <taxon>Enterobacteriaceae</taxon>
        <taxon>Escherichia</taxon>
    </lineage>
</organism>
<name>NANE_ECOHS</name>
<sequence length="229" mass="24088">MSLLAQLDQKIAANGGLIVSCQPVPDSPLDKPEIVAAMALAAEQAGAVAIRIEGVANLQATRAVVSVPIIGIVKRDLEDSPVRITAYIEDVDALAQAGADIIAIDGTDRPRPVPVETLLARIHHHGLLAMTDCSTPEDGLACQKLGAEIIGTTLSGYTTPETPEEPDLALVKTLSEAGCRVIAEGRYNTPAQAADAMRHGAWAVTVGSAITRLEHICQWYNTAMKKAVL</sequence>
<feature type="chain" id="PRO_1000066914" description="Putative N-acetylmannosamine-6-phosphate 2-epimerase">
    <location>
        <begin position="1"/>
        <end position="229"/>
    </location>
</feature>
<proteinExistence type="inferred from homology"/>
<protein>
    <recommendedName>
        <fullName evidence="1">Putative N-acetylmannosamine-6-phosphate 2-epimerase</fullName>
        <ecNumber evidence="1">5.1.3.9</ecNumber>
    </recommendedName>
    <alternativeName>
        <fullName evidence="1">ManNAc-6-P epimerase</fullName>
    </alternativeName>
</protein>
<reference key="1">
    <citation type="journal article" date="2008" name="J. Bacteriol.">
        <title>The pangenome structure of Escherichia coli: comparative genomic analysis of E. coli commensal and pathogenic isolates.</title>
        <authorList>
            <person name="Rasko D.A."/>
            <person name="Rosovitz M.J."/>
            <person name="Myers G.S.A."/>
            <person name="Mongodin E.F."/>
            <person name="Fricke W.F."/>
            <person name="Gajer P."/>
            <person name="Crabtree J."/>
            <person name="Sebaihia M."/>
            <person name="Thomson N.R."/>
            <person name="Chaudhuri R."/>
            <person name="Henderson I.R."/>
            <person name="Sperandio V."/>
            <person name="Ravel J."/>
        </authorList>
    </citation>
    <scope>NUCLEOTIDE SEQUENCE [LARGE SCALE GENOMIC DNA]</scope>
    <source>
        <strain>HS</strain>
    </source>
</reference>
<gene>
    <name evidence="1" type="primary">nanE</name>
    <name type="ordered locus">EcHS_A3411</name>
</gene>
<dbReference type="EC" id="5.1.3.9" evidence="1"/>
<dbReference type="EMBL" id="CP000802">
    <property type="protein sequence ID" value="ABV07637.1"/>
    <property type="molecule type" value="Genomic_DNA"/>
</dbReference>
<dbReference type="RefSeq" id="WP_001300570.1">
    <property type="nucleotide sequence ID" value="NC_009800.1"/>
</dbReference>
<dbReference type="SMR" id="A8A533"/>
<dbReference type="KEGG" id="ecx:EcHS_A3411"/>
<dbReference type="HOGENOM" id="CLU_086300_0_0_6"/>
<dbReference type="UniPathway" id="UPA00629">
    <property type="reaction ID" value="UER00682"/>
</dbReference>
<dbReference type="GO" id="GO:0005829">
    <property type="term" value="C:cytosol"/>
    <property type="evidence" value="ECO:0007669"/>
    <property type="project" value="TreeGrafter"/>
</dbReference>
<dbReference type="GO" id="GO:0047465">
    <property type="term" value="F:N-acylglucosamine-6-phosphate 2-epimerase activity"/>
    <property type="evidence" value="ECO:0007669"/>
    <property type="project" value="UniProtKB-EC"/>
</dbReference>
<dbReference type="GO" id="GO:0005975">
    <property type="term" value="P:carbohydrate metabolic process"/>
    <property type="evidence" value="ECO:0007669"/>
    <property type="project" value="UniProtKB-UniRule"/>
</dbReference>
<dbReference type="GO" id="GO:0006053">
    <property type="term" value="P:N-acetylmannosamine catabolic process"/>
    <property type="evidence" value="ECO:0007669"/>
    <property type="project" value="TreeGrafter"/>
</dbReference>
<dbReference type="GO" id="GO:0019262">
    <property type="term" value="P:N-acetylneuraminate catabolic process"/>
    <property type="evidence" value="ECO:0007669"/>
    <property type="project" value="UniProtKB-UniRule"/>
</dbReference>
<dbReference type="CDD" id="cd04729">
    <property type="entry name" value="NanE"/>
    <property type="match status" value="1"/>
</dbReference>
<dbReference type="FunFam" id="3.20.20.70:FF:000035">
    <property type="entry name" value="Putative N-acetylmannosamine-6-phosphate 2-epimerase"/>
    <property type="match status" value="1"/>
</dbReference>
<dbReference type="Gene3D" id="3.20.20.70">
    <property type="entry name" value="Aldolase class I"/>
    <property type="match status" value="1"/>
</dbReference>
<dbReference type="HAMAP" id="MF_01235">
    <property type="entry name" value="ManNAc6P_epimer"/>
    <property type="match status" value="1"/>
</dbReference>
<dbReference type="InterPro" id="IPR013785">
    <property type="entry name" value="Aldolase_TIM"/>
</dbReference>
<dbReference type="InterPro" id="IPR007260">
    <property type="entry name" value="NanE"/>
</dbReference>
<dbReference type="InterPro" id="IPR011060">
    <property type="entry name" value="RibuloseP-bd_barrel"/>
</dbReference>
<dbReference type="NCBIfam" id="NF002231">
    <property type="entry name" value="PRK01130.1"/>
    <property type="match status" value="1"/>
</dbReference>
<dbReference type="PANTHER" id="PTHR36204">
    <property type="entry name" value="N-ACETYLMANNOSAMINE-6-PHOSPHATE 2-EPIMERASE-RELATED"/>
    <property type="match status" value="1"/>
</dbReference>
<dbReference type="PANTHER" id="PTHR36204:SF1">
    <property type="entry name" value="N-ACETYLMANNOSAMINE-6-PHOSPHATE 2-EPIMERASE-RELATED"/>
    <property type="match status" value="1"/>
</dbReference>
<dbReference type="Pfam" id="PF04131">
    <property type="entry name" value="NanE"/>
    <property type="match status" value="1"/>
</dbReference>
<dbReference type="SUPFAM" id="SSF51366">
    <property type="entry name" value="Ribulose-phoshate binding barrel"/>
    <property type="match status" value="1"/>
</dbReference>
<evidence type="ECO:0000255" key="1">
    <source>
        <dbReference type="HAMAP-Rule" id="MF_01235"/>
    </source>
</evidence>
<keyword id="KW-0119">Carbohydrate metabolism</keyword>
<keyword id="KW-0413">Isomerase</keyword>
<accession>A8A533</accession>
<comment type="function">
    <text evidence="1">Converts N-acetylmannosamine-6-phosphate (ManNAc-6-P) to N-acetylglucosamine-6-phosphate (GlcNAc-6-P).</text>
</comment>
<comment type="catalytic activity">
    <reaction evidence="1">
        <text>an N-acyl-D-glucosamine 6-phosphate = an N-acyl-D-mannosamine 6-phosphate</text>
        <dbReference type="Rhea" id="RHEA:23932"/>
        <dbReference type="ChEBI" id="CHEBI:57599"/>
        <dbReference type="ChEBI" id="CHEBI:57666"/>
        <dbReference type="EC" id="5.1.3.9"/>
    </reaction>
</comment>
<comment type="pathway">
    <text evidence="1">Amino-sugar metabolism; N-acetylneuraminate degradation; D-fructose 6-phosphate from N-acetylneuraminate: step 3/5.</text>
</comment>
<comment type="similarity">
    <text evidence="1">Belongs to the NanE family.</text>
</comment>